<dbReference type="EC" id="2.1.1.14" evidence="1"/>
<dbReference type="EMBL" id="CP000969">
    <property type="protein sequence ID" value="ACB09871.1"/>
    <property type="molecule type" value="Genomic_DNA"/>
</dbReference>
<dbReference type="RefSeq" id="WP_004079949.1">
    <property type="nucleotide sequence ID" value="NC_010483.1"/>
</dbReference>
<dbReference type="SMR" id="B1LC63"/>
<dbReference type="KEGG" id="trq:TRQ2_1533"/>
<dbReference type="HOGENOM" id="CLU_013175_0_0_0"/>
<dbReference type="UniPathway" id="UPA00051">
    <property type="reaction ID" value="UER00082"/>
</dbReference>
<dbReference type="Proteomes" id="UP000001687">
    <property type="component" value="Chromosome"/>
</dbReference>
<dbReference type="GO" id="GO:0003871">
    <property type="term" value="F:5-methyltetrahydropteroyltriglutamate-homocysteine S-methyltransferase activity"/>
    <property type="evidence" value="ECO:0007669"/>
    <property type="project" value="UniProtKB-UniRule"/>
</dbReference>
<dbReference type="GO" id="GO:0008270">
    <property type="term" value="F:zinc ion binding"/>
    <property type="evidence" value="ECO:0007669"/>
    <property type="project" value="InterPro"/>
</dbReference>
<dbReference type="GO" id="GO:0009086">
    <property type="term" value="P:methionine biosynthetic process"/>
    <property type="evidence" value="ECO:0007669"/>
    <property type="project" value="UniProtKB-UniRule"/>
</dbReference>
<dbReference type="GO" id="GO:0032259">
    <property type="term" value="P:methylation"/>
    <property type="evidence" value="ECO:0007669"/>
    <property type="project" value="UniProtKB-KW"/>
</dbReference>
<dbReference type="CDD" id="cd03311">
    <property type="entry name" value="CIMS_C_terminal_like"/>
    <property type="match status" value="1"/>
</dbReference>
<dbReference type="CDD" id="cd03312">
    <property type="entry name" value="CIMS_N_terminal_like"/>
    <property type="match status" value="1"/>
</dbReference>
<dbReference type="Gene3D" id="3.20.20.210">
    <property type="match status" value="2"/>
</dbReference>
<dbReference type="HAMAP" id="MF_00172">
    <property type="entry name" value="Meth_synth"/>
    <property type="match status" value="1"/>
</dbReference>
<dbReference type="InterPro" id="IPR013215">
    <property type="entry name" value="Cbl-indep_Met_Synth_N"/>
</dbReference>
<dbReference type="InterPro" id="IPR006276">
    <property type="entry name" value="Cobalamin-indep_Met_synthase"/>
</dbReference>
<dbReference type="InterPro" id="IPR002629">
    <property type="entry name" value="Met_Synth_C/arc"/>
</dbReference>
<dbReference type="InterPro" id="IPR038071">
    <property type="entry name" value="UROD/MetE-like_sf"/>
</dbReference>
<dbReference type="NCBIfam" id="TIGR01371">
    <property type="entry name" value="met_syn_B12ind"/>
    <property type="match status" value="1"/>
</dbReference>
<dbReference type="NCBIfam" id="NF003556">
    <property type="entry name" value="PRK05222.1"/>
    <property type="match status" value="1"/>
</dbReference>
<dbReference type="PANTHER" id="PTHR30519">
    <property type="entry name" value="5-METHYLTETRAHYDROPTEROYLTRIGLUTAMATE--HOMOCYSTEINE METHYLTRANSFERASE"/>
    <property type="match status" value="1"/>
</dbReference>
<dbReference type="Pfam" id="PF08267">
    <property type="entry name" value="Meth_synt_1"/>
    <property type="match status" value="1"/>
</dbReference>
<dbReference type="Pfam" id="PF01717">
    <property type="entry name" value="Meth_synt_2"/>
    <property type="match status" value="1"/>
</dbReference>
<dbReference type="PIRSF" id="PIRSF000382">
    <property type="entry name" value="MeTrfase_B12_ind"/>
    <property type="match status" value="1"/>
</dbReference>
<dbReference type="SUPFAM" id="SSF51726">
    <property type="entry name" value="UROD/MetE-like"/>
    <property type="match status" value="2"/>
</dbReference>
<sequence>MKAYAFGFPKIGEKREFKKALEDFWKGKITEEQFEEEMNKLRMYMVENYRKNVDVIPSNELSYYDFVLDTAVMVGAVPERFGEYRGLSTYFDMARGGKALEMTKFFNTNYHYLVPEIETEEFYLLENKPLEDYLFFKSKGIETAPWVIGPFTFLYLSKRNGEWIRRPNQMEKLLESLVSVYKEVFEKLVENGCKEILVNEPAFVCDLEKAHWDLILNVYRELSEFPLTVFTYYDSVSDYEACVSLPVKRLHFDFVSNEENLKNLEKHGFPEDKKLVAGVINGRQPWKVDLRKVASLVEKLGASAISNSCPLFHLPVTLELENNLPGGLKEKLAFAKEKLEELKMLKDFLEGKTFDLPNVSFEDFAVDLQAVERVRNLPEDSFRREKEYTERDRIQRERLNLPLFPTTTIGSFPQTPEVRKMRSKYRKGEISKEEYEAFIKEQIKKAIELQEEIGLDVLVHGEFERTDMVEFFAEKLNGIATTQNGWVLSYGSRCYRPPIIYGTVTRPEPMTLKEITYAQSLTEKPVKGMLTGPVTIMSWSYYREDIPEREIAYQIALAINEEVKDLEEAGIKIVQIDEPAFREKAPIKKSKWPEYFEWAINAFNLAANARPETQIHAHMCYSDFNEIIEYIHQLEFDVISIEASRSKGEIISAFENFKGWIKQIGVGVWDIHSPAVPSINEMREIVERVLRVLPKELIWINPDCGLKTRNWDEVIPSLRNMVALAKEMREKFES</sequence>
<accession>B1LC63</accession>
<name>METE_THESQ</name>
<evidence type="ECO:0000255" key="1">
    <source>
        <dbReference type="HAMAP-Rule" id="MF_00172"/>
    </source>
</evidence>
<organism>
    <name type="scientific">Thermotoga sp. (strain RQ2)</name>
    <dbReference type="NCBI Taxonomy" id="126740"/>
    <lineage>
        <taxon>Bacteria</taxon>
        <taxon>Thermotogati</taxon>
        <taxon>Thermotogota</taxon>
        <taxon>Thermotogae</taxon>
        <taxon>Thermotogales</taxon>
        <taxon>Thermotogaceae</taxon>
        <taxon>Thermotoga</taxon>
    </lineage>
</organism>
<comment type="function">
    <text evidence="1">Catalyzes the transfer of a methyl group from 5-methyltetrahydrofolate to homocysteine resulting in methionine formation.</text>
</comment>
<comment type="catalytic activity">
    <reaction evidence="1">
        <text>5-methyltetrahydropteroyltri-L-glutamate + L-homocysteine = tetrahydropteroyltri-L-glutamate + L-methionine</text>
        <dbReference type="Rhea" id="RHEA:21196"/>
        <dbReference type="ChEBI" id="CHEBI:57844"/>
        <dbReference type="ChEBI" id="CHEBI:58140"/>
        <dbReference type="ChEBI" id="CHEBI:58199"/>
        <dbReference type="ChEBI" id="CHEBI:58207"/>
        <dbReference type="EC" id="2.1.1.14"/>
    </reaction>
</comment>
<comment type="cofactor">
    <cofactor evidence="1">
        <name>Zn(2+)</name>
        <dbReference type="ChEBI" id="CHEBI:29105"/>
    </cofactor>
    <text evidence="1">Binds 1 zinc ion per subunit.</text>
</comment>
<comment type="pathway">
    <text evidence="1">Amino-acid biosynthesis; L-methionine biosynthesis via de novo pathway; L-methionine from L-homocysteine (MetE route): step 1/1.</text>
</comment>
<comment type="similarity">
    <text evidence="1">Belongs to the vitamin-B12 independent methionine synthase family.</text>
</comment>
<keyword id="KW-0028">Amino-acid biosynthesis</keyword>
<keyword id="KW-0479">Metal-binding</keyword>
<keyword id="KW-0486">Methionine biosynthesis</keyword>
<keyword id="KW-0489">Methyltransferase</keyword>
<keyword id="KW-0677">Repeat</keyword>
<keyword id="KW-0808">Transferase</keyword>
<keyword id="KW-0862">Zinc</keyword>
<feature type="chain" id="PRO_1000097849" description="5-methyltetrahydropteroyltriglutamate--homocysteine methyltransferase">
    <location>
        <begin position="1"/>
        <end position="734"/>
    </location>
</feature>
<feature type="active site" description="Proton donor" evidence="1">
    <location>
        <position position="672"/>
    </location>
</feature>
<feature type="binding site" evidence="1">
    <location>
        <begin position="15"/>
        <end position="18"/>
    </location>
    <ligand>
        <name>5-methyltetrahydropteroyltri-L-glutamate</name>
        <dbReference type="ChEBI" id="CHEBI:58207"/>
    </ligand>
</feature>
<feature type="binding site" evidence="1">
    <location>
        <position position="104"/>
    </location>
    <ligand>
        <name>5-methyltetrahydropteroyltri-L-glutamate</name>
        <dbReference type="ChEBI" id="CHEBI:58207"/>
    </ligand>
</feature>
<feature type="binding site" evidence="1">
    <location>
        <begin position="409"/>
        <end position="411"/>
    </location>
    <ligand>
        <name>L-homocysteine</name>
        <dbReference type="ChEBI" id="CHEBI:58199"/>
    </ligand>
</feature>
<feature type="binding site" evidence="1">
    <location>
        <begin position="409"/>
        <end position="411"/>
    </location>
    <ligand>
        <name>L-methionine</name>
        <dbReference type="ChEBI" id="CHEBI:57844"/>
    </ligand>
</feature>
<feature type="binding site" evidence="1">
    <location>
        <position position="462"/>
    </location>
    <ligand>
        <name>L-homocysteine</name>
        <dbReference type="ChEBI" id="CHEBI:58199"/>
    </ligand>
</feature>
<feature type="binding site" evidence="1">
    <location>
        <position position="462"/>
    </location>
    <ligand>
        <name>L-methionine</name>
        <dbReference type="ChEBI" id="CHEBI:57844"/>
    </ligand>
</feature>
<feature type="binding site" evidence="1">
    <location>
        <begin position="493"/>
        <end position="494"/>
    </location>
    <ligand>
        <name>5-methyltetrahydropteroyltri-L-glutamate</name>
        <dbReference type="ChEBI" id="CHEBI:58207"/>
    </ligand>
</feature>
<feature type="binding site" evidence="1">
    <location>
        <position position="539"/>
    </location>
    <ligand>
        <name>5-methyltetrahydropteroyltri-L-glutamate</name>
        <dbReference type="ChEBI" id="CHEBI:58207"/>
    </ligand>
</feature>
<feature type="binding site" evidence="1">
    <location>
        <position position="577"/>
    </location>
    <ligand>
        <name>L-homocysteine</name>
        <dbReference type="ChEBI" id="CHEBI:58199"/>
    </ligand>
</feature>
<feature type="binding site" evidence="1">
    <location>
        <position position="577"/>
    </location>
    <ligand>
        <name>L-methionine</name>
        <dbReference type="ChEBI" id="CHEBI:57844"/>
    </ligand>
</feature>
<feature type="binding site" evidence="1">
    <location>
        <position position="583"/>
    </location>
    <ligand>
        <name>5-methyltetrahydropteroyltri-L-glutamate</name>
        <dbReference type="ChEBI" id="CHEBI:58207"/>
    </ligand>
</feature>
<feature type="binding site" evidence="1">
    <location>
        <position position="618"/>
    </location>
    <ligand>
        <name>Zn(2+)</name>
        <dbReference type="ChEBI" id="CHEBI:29105"/>
        <note>catalytic</note>
    </ligand>
</feature>
<feature type="binding site" evidence="1">
    <location>
        <position position="620"/>
    </location>
    <ligand>
        <name>Zn(2+)</name>
        <dbReference type="ChEBI" id="CHEBI:29105"/>
        <note>catalytic</note>
    </ligand>
</feature>
<feature type="binding site" evidence="1">
    <location>
        <position position="642"/>
    </location>
    <ligand>
        <name>Zn(2+)</name>
        <dbReference type="ChEBI" id="CHEBI:29105"/>
        <note>catalytic</note>
    </ligand>
</feature>
<feature type="binding site" evidence="1">
    <location>
        <position position="704"/>
    </location>
    <ligand>
        <name>Zn(2+)</name>
        <dbReference type="ChEBI" id="CHEBI:29105"/>
        <note>catalytic</note>
    </ligand>
</feature>
<proteinExistence type="inferred from homology"/>
<protein>
    <recommendedName>
        <fullName evidence="1">5-methyltetrahydropteroyltriglutamate--homocysteine methyltransferase</fullName>
        <ecNumber evidence="1">2.1.1.14</ecNumber>
    </recommendedName>
    <alternativeName>
        <fullName evidence="1">Cobalamin-independent methionine synthase</fullName>
    </alternativeName>
    <alternativeName>
        <fullName evidence="1">Methionine synthase, vitamin-B12 independent isozyme</fullName>
    </alternativeName>
</protein>
<gene>
    <name evidence="1" type="primary">metE</name>
    <name type="ordered locus">TRQ2_1533</name>
</gene>
<reference key="1">
    <citation type="journal article" date="2011" name="J. Bacteriol.">
        <title>Genome sequence of Thermotoga sp. strain RQ2, a hyperthermophilic bacterium isolated from a geothermally heated region of the seafloor near Ribeira Quente, the Azores.</title>
        <authorList>
            <person name="Swithers K.S."/>
            <person name="DiPippo J.L."/>
            <person name="Bruce D.C."/>
            <person name="Detter C."/>
            <person name="Tapia R."/>
            <person name="Han S."/>
            <person name="Saunders E."/>
            <person name="Goodwin L.A."/>
            <person name="Han J."/>
            <person name="Woyke T."/>
            <person name="Pitluck S."/>
            <person name="Pennacchio L."/>
            <person name="Nolan M."/>
            <person name="Mikhailova N."/>
            <person name="Lykidis A."/>
            <person name="Land M.L."/>
            <person name="Brettin T."/>
            <person name="Stetter K.O."/>
            <person name="Nelson K.E."/>
            <person name="Gogarten J.P."/>
            <person name="Noll K.M."/>
        </authorList>
    </citation>
    <scope>NUCLEOTIDE SEQUENCE [LARGE SCALE GENOMIC DNA]</scope>
    <source>
        <strain>RQ2</strain>
    </source>
</reference>